<keyword id="KW-0025">Alternative splicing</keyword>
<keyword id="KW-0325">Glycoprotein</keyword>
<keyword id="KW-0472">Membrane</keyword>
<keyword id="KW-0479">Metal-binding</keyword>
<keyword id="KW-0509">mRNA transport</keyword>
<keyword id="KW-0906">Nuclear pore complex</keyword>
<keyword id="KW-0539">Nucleus</keyword>
<keyword id="KW-0653">Protein transport</keyword>
<keyword id="KW-1185">Reference proteome</keyword>
<keyword id="KW-0677">Repeat</keyword>
<keyword id="KW-0811">Translocation</keyword>
<keyword id="KW-0813">Transport</keyword>
<keyword id="KW-0862">Zinc</keyword>
<keyword id="KW-0863">Zinc-finger</keyword>
<reference key="1">
    <citation type="submission" date="2001-07" db="EMBL/GenBank/DDBJ databases">
        <authorList>
            <person name="Tokuchi H."/>
            <person name="Fujita J."/>
        </authorList>
    </citation>
    <scope>NUCLEOTIDE SEQUENCE [MRNA] (ISOFORM 2)</scope>
    <source>
        <strain>BALB/cJ</strain>
    </source>
</reference>
<reference key="2">
    <citation type="journal article" date="2005" name="Science">
        <title>The transcriptional landscape of the mammalian genome.</title>
        <authorList>
            <person name="Carninci P."/>
            <person name="Kasukawa T."/>
            <person name="Katayama S."/>
            <person name="Gough J."/>
            <person name="Frith M.C."/>
            <person name="Maeda N."/>
            <person name="Oyama R."/>
            <person name="Ravasi T."/>
            <person name="Lenhard B."/>
            <person name="Wells C."/>
            <person name="Kodzius R."/>
            <person name="Shimokawa K."/>
            <person name="Bajic V.B."/>
            <person name="Brenner S.E."/>
            <person name="Batalov S."/>
            <person name="Forrest A.R."/>
            <person name="Zavolan M."/>
            <person name="Davis M.J."/>
            <person name="Wilming L.G."/>
            <person name="Aidinis V."/>
            <person name="Allen J.E."/>
            <person name="Ambesi-Impiombato A."/>
            <person name="Apweiler R."/>
            <person name="Aturaliya R.N."/>
            <person name="Bailey T.L."/>
            <person name="Bansal M."/>
            <person name="Baxter L."/>
            <person name="Beisel K.W."/>
            <person name="Bersano T."/>
            <person name="Bono H."/>
            <person name="Chalk A.M."/>
            <person name="Chiu K.P."/>
            <person name="Choudhary V."/>
            <person name="Christoffels A."/>
            <person name="Clutterbuck D.R."/>
            <person name="Crowe M.L."/>
            <person name="Dalla E."/>
            <person name="Dalrymple B.P."/>
            <person name="de Bono B."/>
            <person name="Della Gatta G."/>
            <person name="di Bernardo D."/>
            <person name="Down T."/>
            <person name="Engstrom P."/>
            <person name="Fagiolini M."/>
            <person name="Faulkner G."/>
            <person name="Fletcher C.F."/>
            <person name="Fukushima T."/>
            <person name="Furuno M."/>
            <person name="Futaki S."/>
            <person name="Gariboldi M."/>
            <person name="Georgii-Hemming P."/>
            <person name="Gingeras T.R."/>
            <person name="Gojobori T."/>
            <person name="Green R.E."/>
            <person name="Gustincich S."/>
            <person name="Harbers M."/>
            <person name="Hayashi Y."/>
            <person name="Hensch T.K."/>
            <person name="Hirokawa N."/>
            <person name="Hill D."/>
            <person name="Huminiecki L."/>
            <person name="Iacono M."/>
            <person name="Ikeo K."/>
            <person name="Iwama A."/>
            <person name="Ishikawa T."/>
            <person name="Jakt M."/>
            <person name="Kanapin A."/>
            <person name="Katoh M."/>
            <person name="Kawasawa Y."/>
            <person name="Kelso J."/>
            <person name="Kitamura H."/>
            <person name="Kitano H."/>
            <person name="Kollias G."/>
            <person name="Krishnan S.P."/>
            <person name="Kruger A."/>
            <person name="Kummerfeld S.K."/>
            <person name="Kurochkin I.V."/>
            <person name="Lareau L.F."/>
            <person name="Lazarevic D."/>
            <person name="Lipovich L."/>
            <person name="Liu J."/>
            <person name="Liuni S."/>
            <person name="McWilliam S."/>
            <person name="Madan Babu M."/>
            <person name="Madera M."/>
            <person name="Marchionni L."/>
            <person name="Matsuda H."/>
            <person name="Matsuzawa S."/>
            <person name="Miki H."/>
            <person name="Mignone F."/>
            <person name="Miyake S."/>
            <person name="Morris K."/>
            <person name="Mottagui-Tabar S."/>
            <person name="Mulder N."/>
            <person name="Nakano N."/>
            <person name="Nakauchi H."/>
            <person name="Ng P."/>
            <person name="Nilsson R."/>
            <person name="Nishiguchi S."/>
            <person name="Nishikawa S."/>
            <person name="Nori F."/>
            <person name="Ohara O."/>
            <person name="Okazaki Y."/>
            <person name="Orlando V."/>
            <person name="Pang K.C."/>
            <person name="Pavan W.J."/>
            <person name="Pavesi G."/>
            <person name="Pesole G."/>
            <person name="Petrovsky N."/>
            <person name="Piazza S."/>
            <person name="Reed J."/>
            <person name="Reid J.F."/>
            <person name="Ring B.Z."/>
            <person name="Ringwald M."/>
            <person name="Rost B."/>
            <person name="Ruan Y."/>
            <person name="Salzberg S.L."/>
            <person name="Sandelin A."/>
            <person name="Schneider C."/>
            <person name="Schoenbach C."/>
            <person name="Sekiguchi K."/>
            <person name="Semple C.A."/>
            <person name="Seno S."/>
            <person name="Sessa L."/>
            <person name="Sheng Y."/>
            <person name="Shibata Y."/>
            <person name="Shimada H."/>
            <person name="Shimada K."/>
            <person name="Silva D."/>
            <person name="Sinclair B."/>
            <person name="Sperling S."/>
            <person name="Stupka E."/>
            <person name="Sugiura K."/>
            <person name="Sultana R."/>
            <person name="Takenaka Y."/>
            <person name="Taki K."/>
            <person name="Tammoja K."/>
            <person name="Tan S.L."/>
            <person name="Tang S."/>
            <person name="Taylor M.S."/>
            <person name="Tegner J."/>
            <person name="Teichmann S.A."/>
            <person name="Ueda H.R."/>
            <person name="van Nimwegen E."/>
            <person name="Verardo R."/>
            <person name="Wei C.L."/>
            <person name="Yagi K."/>
            <person name="Yamanishi H."/>
            <person name="Zabarovsky E."/>
            <person name="Zhu S."/>
            <person name="Zimmer A."/>
            <person name="Hide W."/>
            <person name="Bult C."/>
            <person name="Grimmond S.M."/>
            <person name="Teasdale R.D."/>
            <person name="Liu E.T."/>
            <person name="Brusic V."/>
            <person name="Quackenbush J."/>
            <person name="Wahlestedt C."/>
            <person name="Mattick J.S."/>
            <person name="Hume D.A."/>
            <person name="Kai C."/>
            <person name="Sasaki D."/>
            <person name="Tomaru Y."/>
            <person name="Fukuda S."/>
            <person name="Kanamori-Katayama M."/>
            <person name="Suzuki M."/>
            <person name="Aoki J."/>
            <person name="Arakawa T."/>
            <person name="Iida J."/>
            <person name="Imamura K."/>
            <person name="Itoh M."/>
            <person name="Kato T."/>
            <person name="Kawaji H."/>
            <person name="Kawagashira N."/>
            <person name="Kawashima T."/>
            <person name="Kojima M."/>
            <person name="Kondo S."/>
            <person name="Konno H."/>
            <person name="Nakano K."/>
            <person name="Ninomiya N."/>
            <person name="Nishio T."/>
            <person name="Okada M."/>
            <person name="Plessy C."/>
            <person name="Shibata K."/>
            <person name="Shiraki T."/>
            <person name="Suzuki S."/>
            <person name="Tagami M."/>
            <person name="Waki K."/>
            <person name="Watahiki A."/>
            <person name="Okamura-Oho Y."/>
            <person name="Suzuki H."/>
            <person name="Kawai J."/>
            <person name="Hayashizaki Y."/>
        </authorList>
    </citation>
    <scope>NUCLEOTIDE SEQUENCE [LARGE SCALE MRNA] (ISOFORM 1)</scope>
    <source>
        <strain>C57BL/6J</strain>
        <tissue>Embryo</tissue>
        <tissue>Testis</tissue>
    </source>
</reference>
<reference key="3">
    <citation type="journal article" date="2004" name="Genome Res.">
        <title>The status, quality, and expansion of the NIH full-length cDNA project: the Mammalian Gene Collection (MGC).</title>
        <authorList>
            <consortium name="The MGC Project Team"/>
        </authorList>
    </citation>
    <scope>NUCLEOTIDE SEQUENCE [LARGE SCALE MRNA] (ISOFORM 1)</scope>
    <source>
        <strain>FVB/N</strain>
        <tissue>Mammary tumor</tissue>
    </source>
</reference>
<accession>Q8CIC2</accession>
<accession>Q8BJX3</accession>
<accession>Q8BVP7</accession>
<accession>Q924S0</accession>
<comment type="function">
    <text evidence="2">Required for the export of mRNAs containing poly(A) tails from the nucleus into the cytoplasm.</text>
</comment>
<comment type="subunit">
    <text evidence="2">Probable component of the nuclear pore complex (NPC). Interacts with nuclear export protein NXF1. Interacts with GLE1. Able to form a heterotrimer with NUP155 and GLE1 in vitro (By similarity). Interacts with XPO1 (By similarity).</text>
</comment>
<comment type="subcellular location">
    <subcellularLocation>
        <location evidence="2">Nucleus</location>
        <location evidence="2">Nuclear pore complex</location>
    </subcellularLocation>
    <subcellularLocation>
        <location evidence="2">Nucleus membrane</location>
        <topology evidence="2">Peripheral membrane protein</topology>
        <orientation evidence="2">Cytoplasmic side</orientation>
    </subcellularLocation>
    <text evidence="2">Excluded from the nucleolus.</text>
</comment>
<comment type="alternative products">
    <event type="alternative splicing"/>
    <isoform>
        <id>Q8CIC2-1</id>
        <name>1</name>
        <sequence type="displayed"/>
    </isoform>
    <isoform>
        <id>Q8CIC2-2</id>
        <name>2</name>
        <name>T</name>
        <sequence type="described" ref="VSP_016483 VSP_016484"/>
    </isoform>
</comment>
<comment type="domain">
    <text evidence="2">The FG repeats are interaction sites for karyopherins (importins, exportins) and form probably an affinity gradient, guiding the transport proteins unidirectionally with their cargo through the NPC.</text>
</comment>
<comment type="PTM">
    <text evidence="2">O-glycosylated.</text>
</comment>
<comment type="sequence caution" evidence="6">
    <conflict type="frameshift">
        <sequence resource="EMBL-CDS" id="BAC36589"/>
    </conflict>
</comment>
<name>NUP42_MOUSE</name>
<gene>
    <name type="primary">Nup42</name>
    <name type="synonym">Nupl2</name>
</gene>
<proteinExistence type="evidence at transcript level"/>
<feature type="chain" id="PRO_0000204896" description="Nucleoporin NUP42">
    <location>
        <begin position="1"/>
        <end position="420"/>
    </location>
</feature>
<feature type="repeat" description="FG 1">
    <location>
        <begin position="14"/>
        <end position="15"/>
    </location>
</feature>
<feature type="repeat" description="FG 2">
    <location>
        <begin position="82"/>
        <end position="83"/>
    </location>
</feature>
<feature type="repeat" description="FG 3">
    <location>
        <begin position="95"/>
        <end position="96"/>
    </location>
</feature>
<feature type="repeat" description="FG 4">
    <location>
        <begin position="218"/>
        <end position="219"/>
    </location>
</feature>
<feature type="repeat" description="FG 5">
    <location>
        <begin position="220"/>
        <end position="221"/>
    </location>
</feature>
<feature type="repeat" description="FG 6">
    <location>
        <begin position="228"/>
        <end position="229"/>
    </location>
</feature>
<feature type="repeat" description="FG 7">
    <location>
        <begin position="265"/>
        <end position="266"/>
    </location>
</feature>
<feature type="repeat" description="FG 8">
    <location>
        <begin position="271"/>
        <end position="272"/>
    </location>
</feature>
<feature type="repeat" description="FG 9">
    <location>
        <begin position="288"/>
        <end position="289"/>
    </location>
</feature>
<feature type="repeat" description="FG 10">
    <location>
        <begin position="345"/>
        <end position="346"/>
    </location>
</feature>
<feature type="repeat" description="FG 11">
    <location>
        <begin position="364"/>
        <end position="365"/>
    </location>
</feature>
<feature type="zinc finger region" description="C3H1-type" evidence="3">
    <location>
        <begin position="1"/>
        <end position="25"/>
    </location>
</feature>
<feature type="region of interest" description="Disordered" evidence="4">
    <location>
        <begin position="25"/>
        <end position="111"/>
    </location>
</feature>
<feature type="region of interest" description="Disordered" evidence="4">
    <location>
        <begin position="323"/>
        <end position="345"/>
    </location>
</feature>
<feature type="region of interest" description="Interaction with GLE1" evidence="1">
    <location>
        <begin position="365"/>
        <end position="420"/>
    </location>
</feature>
<feature type="compositionally biased region" description="Polar residues" evidence="4">
    <location>
        <begin position="42"/>
        <end position="67"/>
    </location>
</feature>
<feature type="compositionally biased region" description="Polar residues" evidence="4">
    <location>
        <begin position="87"/>
        <end position="102"/>
    </location>
</feature>
<feature type="splice variant" id="VSP_016483" description="In isoform 2." evidence="5">
    <original>GFTDISPEELRL</original>
    <variation>AKLCSTACKSVE</variation>
    <location>
        <begin position="149"/>
        <end position="160"/>
    </location>
</feature>
<feature type="splice variant" id="VSP_016484" description="In isoform 2." evidence="5">
    <location>
        <begin position="161"/>
        <end position="420"/>
    </location>
</feature>
<feature type="sequence conflict" description="In Ref. 2; BAC36589." evidence="6" ref="2">
    <original>V</original>
    <variation>A</variation>
    <location>
        <position position="137"/>
    </location>
</feature>
<feature type="sequence conflict" description="In Ref. 2; BAC36589." evidence="6" ref="2">
    <original>R</original>
    <variation>G</variation>
    <location>
        <position position="142"/>
    </location>
</feature>
<feature type="sequence conflict" description="In Ref. 2; BAC36589/BAC37297." evidence="6" ref="2">
    <original>A</original>
    <variation>G</variation>
    <location>
        <position position="308"/>
    </location>
</feature>
<feature type="sequence conflict" description="In Ref. 2; BAC36589/BAC37297." evidence="6" ref="2">
    <original>V</original>
    <variation>A</variation>
    <location>
        <position position="343"/>
    </location>
</feature>
<feature type="sequence conflict" description="In Ref. 2; BAC37297." evidence="6" ref="2">
    <original>A</original>
    <variation>T</variation>
    <location>
        <position position="375"/>
    </location>
</feature>
<organism>
    <name type="scientific">Mus musculus</name>
    <name type="common">Mouse</name>
    <dbReference type="NCBI Taxonomy" id="10090"/>
    <lineage>
        <taxon>Eukaryota</taxon>
        <taxon>Metazoa</taxon>
        <taxon>Chordata</taxon>
        <taxon>Craniata</taxon>
        <taxon>Vertebrata</taxon>
        <taxon>Euteleostomi</taxon>
        <taxon>Mammalia</taxon>
        <taxon>Eutheria</taxon>
        <taxon>Euarchontoglires</taxon>
        <taxon>Glires</taxon>
        <taxon>Rodentia</taxon>
        <taxon>Myomorpha</taxon>
        <taxon>Muroidea</taxon>
        <taxon>Muridae</taxon>
        <taxon>Murinae</taxon>
        <taxon>Mus</taxon>
        <taxon>Mus</taxon>
    </lineage>
</organism>
<sequence>MTICQFFLQGRCRFGDRCWNEHPGARGAGGARQPPPQQQPPSGNNRRGWNASSQRYSNVIQPSSFPKSTPWGGSRDQDKPPFGSFDSGASTSRGFGSSQNPFASPLSDEQKDEKKLLEGIVKDVEVWESSGQWMFSVYSPVRKKPNISGFTDISPEELRLEYHNFLTSNNLQSYLNSVQQLVSQWRNRINELKNLTMSTKGALLSDVKDGVSQAVPAFGFGSKQAGSFGSPGFPVNNSSSSTVQNFSFKTSPGLATPPSGSTSVFGSHPAFGAGPSAGSSISSSTPAFGLGKPEATSAASFSFKSPEASSFASPGFSGFPASMAASPSGSTTAPPLRSGSSVVGFGSPSPHSQAVFAKPSTDVFGGSGISTSVLASGAADNALFTPRDQLMKEELEQFQSQRFTLGKIPLKPPPVELLTV</sequence>
<evidence type="ECO:0000250" key="1"/>
<evidence type="ECO:0000250" key="2">
    <source>
        <dbReference type="UniProtKB" id="O15504"/>
    </source>
</evidence>
<evidence type="ECO:0000255" key="3">
    <source>
        <dbReference type="PROSITE-ProRule" id="PRU00723"/>
    </source>
</evidence>
<evidence type="ECO:0000256" key="4">
    <source>
        <dbReference type="SAM" id="MobiDB-lite"/>
    </source>
</evidence>
<evidence type="ECO:0000303" key="5">
    <source ref="1"/>
</evidence>
<evidence type="ECO:0000305" key="6"/>
<protein>
    <recommendedName>
        <fullName evidence="6">Nucleoporin NUP42</fullName>
    </recommendedName>
    <alternativeName>
        <fullName>NLP-1</fullName>
    </alternativeName>
    <alternativeName>
        <fullName>Nucleoporin-like protein 2</fullName>
    </alternativeName>
</protein>
<dbReference type="EMBL" id="AB067574">
    <property type="protein sequence ID" value="BAB62307.1"/>
    <property type="molecule type" value="mRNA"/>
</dbReference>
<dbReference type="EMBL" id="AK077066">
    <property type="protein sequence ID" value="BAC36589.1"/>
    <property type="status" value="ALT_FRAME"/>
    <property type="molecule type" value="mRNA"/>
</dbReference>
<dbReference type="EMBL" id="AK078478">
    <property type="protein sequence ID" value="BAC37297.1"/>
    <property type="molecule type" value="mRNA"/>
</dbReference>
<dbReference type="EMBL" id="BC033270">
    <property type="protein sequence ID" value="AAH33270.1"/>
    <property type="molecule type" value="mRNA"/>
</dbReference>
<dbReference type="CCDS" id="CCDS19115.1">
    <molecule id="Q8CIC2-1"/>
</dbReference>
<dbReference type="RefSeq" id="NP_001333511.1">
    <property type="nucleotide sequence ID" value="NM_001346582.1"/>
</dbReference>
<dbReference type="RefSeq" id="NP_694732.3">
    <property type="nucleotide sequence ID" value="NM_153092.4"/>
</dbReference>
<dbReference type="SMR" id="Q8CIC2"/>
<dbReference type="BioGRID" id="231073">
    <property type="interactions" value="6"/>
</dbReference>
<dbReference type="ComplexPortal" id="CPX-4474">
    <property type="entry name" value="Nuclear pore complex"/>
</dbReference>
<dbReference type="FunCoup" id="Q8CIC2">
    <property type="interactions" value="3143"/>
</dbReference>
<dbReference type="STRING" id="10090.ENSMUSP00000062766"/>
<dbReference type="iPTMnet" id="Q8CIC2"/>
<dbReference type="PhosphoSitePlus" id="Q8CIC2"/>
<dbReference type="PaxDb" id="10090-ENSMUSP00000062766"/>
<dbReference type="PeptideAtlas" id="Q8CIC2"/>
<dbReference type="ProteomicsDB" id="294255">
    <molecule id="Q8CIC2-1"/>
</dbReference>
<dbReference type="ProteomicsDB" id="294256">
    <molecule id="Q8CIC2-2"/>
</dbReference>
<dbReference type="Pumba" id="Q8CIC2"/>
<dbReference type="GeneID" id="231042"/>
<dbReference type="KEGG" id="mmu:231042"/>
<dbReference type="AGR" id="MGI:2387631"/>
<dbReference type="CTD" id="11097"/>
<dbReference type="MGI" id="MGI:2387631">
    <property type="gene designation" value="Nup42"/>
</dbReference>
<dbReference type="eggNOG" id="ENOG502R2TD">
    <property type="taxonomic scope" value="Eukaryota"/>
</dbReference>
<dbReference type="InParanoid" id="Q8CIC2"/>
<dbReference type="OrthoDB" id="20729at2759"/>
<dbReference type="PhylomeDB" id="Q8CIC2"/>
<dbReference type="Reactome" id="R-MMU-159227">
    <property type="pathway name" value="Transport of the SLBP independent Mature mRNA"/>
</dbReference>
<dbReference type="Reactome" id="R-MMU-159230">
    <property type="pathway name" value="Transport of the SLBP Dependant Mature mRNA"/>
</dbReference>
<dbReference type="Reactome" id="R-MMU-159231">
    <property type="pathway name" value="Transport of Mature mRNA Derived from an Intronless Transcript"/>
</dbReference>
<dbReference type="Reactome" id="R-MMU-159236">
    <property type="pathway name" value="Transport of Mature mRNA derived from an Intron-Containing Transcript"/>
</dbReference>
<dbReference type="Reactome" id="R-MMU-170822">
    <property type="pathway name" value="Regulation of Glucokinase by Glucokinase Regulatory Protein"/>
</dbReference>
<dbReference type="Reactome" id="R-MMU-191859">
    <property type="pathway name" value="snRNP Assembly"/>
</dbReference>
<dbReference type="Reactome" id="R-MMU-3108214">
    <property type="pathway name" value="SUMOylation of DNA damage response and repair proteins"/>
</dbReference>
<dbReference type="Reactome" id="R-MMU-3232142">
    <property type="pathway name" value="SUMOylation of ubiquitinylation proteins"/>
</dbReference>
<dbReference type="Reactome" id="R-MMU-3301854">
    <property type="pathway name" value="Nuclear Pore Complex (NPC) Disassembly"/>
</dbReference>
<dbReference type="Reactome" id="R-MMU-3371453">
    <property type="pathway name" value="Regulation of HSF1-mediated heat shock response"/>
</dbReference>
<dbReference type="Reactome" id="R-MMU-4085377">
    <property type="pathway name" value="SUMOylation of SUMOylation proteins"/>
</dbReference>
<dbReference type="Reactome" id="R-MMU-4551638">
    <property type="pathway name" value="SUMOylation of chromatin organization proteins"/>
</dbReference>
<dbReference type="Reactome" id="R-MMU-4570464">
    <property type="pathway name" value="SUMOylation of RNA binding proteins"/>
</dbReference>
<dbReference type="Reactome" id="R-MMU-4615885">
    <property type="pathway name" value="SUMOylation of DNA replication proteins"/>
</dbReference>
<dbReference type="Reactome" id="R-MMU-5578749">
    <property type="pathway name" value="Transcriptional regulation by small RNAs"/>
</dbReference>
<dbReference type="BioGRID-ORCS" id="231042">
    <property type="hits" value="7 hits in 81 CRISPR screens"/>
</dbReference>
<dbReference type="ChiTaRS" id="Nupl2">
    <property type="organism name" value="mouse"/>
</dbReference>
<dbReference type="PRO" id="PR:Q8CIC2"/>
<dbReference type="Proteomes" id="UP000000589">
    <property type="component" value="Unplaced"/>
</dbReference>
<dbReference type="RNAct" id="Q8CIC2">
    <property type="molecule type" value="protein"/>
</dbReference>
<dbReference type="GO" id="GO:0005635">
    <property type="term" value="C:nuclear envelope"/>
    <property type="evidence" value="ECO:0000266"/>
    <property type="project" value="ComplexPortal"/>
</dbReference>
<dbReference type="GO" id="GO:0031965">
    <property type="term" value="C:nuclear membrane"/>
    <property type="evidence" value="ECO:0007669"/>
    <property type="project" value="UniProtKB-SubCell"/>
</dbReference>
<dbReference type="GO" id="GO:0005643">
    <property type="term" value="C:nuclear pore"/>
    <property type="evidence" value="ECO:0000303"/>
    <property type="project" value="ComplexPortal"/>
</dbReference>
<dbReference type="GO" id="GO:0001750">
    <property type="term" value="C:photoreceptor outer segment"/>
    <property type="evidence" value="ECO:0000314"/>
    <property type="project" value="MGI"/>
</dbReference>
<dbReference type="GO" id="GO:0008270">
    <property type="term" value="F:zinc ion binding"/>
    <property type="evidence" value="ECO:0007669"/>
    <property type="project" value="UniProtKB-KW"/>
</dbReference>
<dbReference type="GO" id="GO:0051028">
    <property type="term" value="P:mRNA transport"/>
    <property type="evidence" value="ECO:0007669"/>
    <property type="project" value="UniProtKB-KW"/>
</dbReference>
<dbReference type="GO" id="GO:0006913">
    <property type="term" value="P:nucleocytoplasmic transport"/>
    <property type="evidence" value="ECO:0000303"/>
    <property type="project" value="ComplexPortal"/>
</dbReference>
<dbReference type="GO" id="GO:0015031">
    <property type="term" value="P:protein transport"/>
    <property type="evidence" value="ECO:0007669"/>
    <property type="project" value="UniProtKB-KW"/>
</dbReference>
<dbReference type="InterPro" id="IPR051767">
    <property type="entry name" value="Nucleoporin_NUP42"/>
</dbReference>
<dbReference type="InterPro" id="IPR000571">
    <property type="entry name" value="Znf_CCCH"/>
</dbReference>
<dbReference type="PANTHER" id="PTHR46527:SF1">
    <property type="entry name" value="NUCLEOPORIN NUP42"/>
    <property type="match status" value="1"/>
</dbReference>
<dbReference type="PANTHER" id="PTHR46527">
    <property type="entry name" value="NUCLEOPORIN-LIKE PROTEIN 2"/>
    <property type="match status" value="1"/>
</dbReference>
<dbReference type="SMART" id="SM00356">
    <property type="entry name" value="ZnF_C3H1"/>
    <property type="match status" value="1"/>
</dbReference>
<dbReference type="PROSITE" id="PS50103">
    <property type="entry name" value="ZF_C3H1"/>
    <property type="match status" value="1"/>
</dbReference>